<reference key="1">
    <citation type="submission" date="2006-12" db="EMBL/GenBank/DDBJ databases">
        <title>Complete sequence of chromosome of Mycobacterium sp. KMS.</title>
        <authorList>
            <consortium name="US DOE Joint Genome Institute"/>
            <person name="Copeland A."/>
            <person name="Lucas S."/>
            <person name="Lapidus A."/>
            <person name="Barry K."/>
            <person name="Detter J.C."/>
            <person name="Glavina del Rio T."/>
            <person name="Hammon N."/>
            <person name="Israni S."/>
            <person name="Dalin E."/>
            <person name="Tice H."/>
            <person name="Pitluck S."/>
            <person name="Kiss H."/>
            <person name="Brettin T."/>
            <person name="Bruce D."/>
            <person name="Han C."/>
            <person name="Tapia R."/>
            <person name="Gilna P."/>
            <person name="Schmutz J."/>
            <person name="Larimer F."/>
            <person name="Land M."/>
            <person name="Hauser L."/>
            <person name="Kyrpides N."/>
            <person name="Mikhailova N."/>
            <person name="Miller C.D."/>
            <person name="Richardson P."/>
        </authorList>
    </citation>
    <scope>NUCLEOTIDE SEQUENCE [LARGE SCALE GENOMIC DNA]</scope>
    <source>
        <strain>KMS</strain>
    </source>
</reference>
<evidence type="ECO:0000255" key="1">
    <source>
        <dbReference type="HAMAP-Rule" id="MF_00048"/>
    </source>
</evidence>
<gene>
    <name type="ordered locus">Mkms_2031</name>
</gene>
<proteinExistence type="inferred from homology"/>
<organism>
    <name type="scientific">Mycobacterium sp. (strain KMS)</name>
    <dbReference type="NCBI Taxonomy" id="189918"/>
    <lineage>
        <taxon>Bacteria</taxon>
        <taxon>Bacillati</taxon>
        <taxon>Actinomycetota</taxon>
        <taxon>Actinomycetes</taxon>
        <taxon>Mycobacteriales</taxon>
        <taxon>Mycobacteriaceae</taxon>
        <taxon>Mycobacterium</taxon>
    </lineage>
</organism>
<comment type="similarity">
    <text evidence="1">Belongs to the UPF0102 family.</text>
</comment>
<accession>A1UEH2</accession>
<feature type="chain" id="PRO_0000336208" description="UPF0102 protein Mkms_2031">
    <location>
        <begin position="1"/>
        <end position="135"/>
    </location>
</feature>
<name>Y2031_MYCSK</name>
<protein>
    <recommendedName>
        <fullName evidence="1">UPF0102 protein Mkms_2031</fullName>
    </recommendedName>
</protein>
<dbReference type="EMBL" id="CP000518">
    <property type="protein sequence ID" value="ABL91230.1"/>
    <property type="molecule type" value="Genomic_DNA"/>
</dbReference>
<dbReference type="SMR" id="A1UEH2"/>
<dbReference type="STRING" id="189918.Mkms_2031"/>
<dbReference type="KEGG" id="mkm:Mkms_2031"/>
<dbReference type="HOGENOM" id="CLU_115353_2_3_11"/>
<dbReference type="OrthoDB" id="9794876at2"/>
<dbReference type="GO" id="GO:0003676">
    <property type="term" value="F:nucleic acid binding"/>
    <property type="evidence" value="ECO:0007669"/>
    <property type="project" value="InterPro"/>
</dbReference>
<dbReference type="CDD" id="cd20736">
    <property type="entry name" value="PoNe_Nuclease"/>
    <property type="match status" value="1"/>
</dbReference>
<dbReference type="Gene3D" id="3.40.1350.10">
    <property type="match status" value="1"/>
</dbReference>
<dbReference type="HAMAP" id="MF_00048">
    <property type="entry name" value="UPF0102"/>
    <property type="match status" value="1"/>
</dbReference>
<dbReference type="InterPro" id="IPR011335">
    <property type="entry name" value="Restrct_endonuc-II-like"/>
</dbReference>
<dbReference type="InterPro" id="IPR011856">
    <property type="entry name" value="tRNA_endonuc-like_dom_sf"/>
</dbReference>
<dbReference type="InterPro" id="IPR003509">
    <property type="entry name" value="UPF0102_YraN-like"/>
</dbReference>
<dbReference type="NCBIfam" id="NF009150">
    <property type="entry name" value="PRK12497.1-3"/>
    <property type="match status" value="1"/>
</dbReference>
<dbReference type="NCBIfam" id="NF009153">
    <property type="entry name" value="PRK12497.3-1"/>
    <property type="match status" value="1"/>
</dbReference>
<dbReference type="NCBIfam" id="NF009154">
    <property type="entry name" value="PRK12497.3-3"/>
    <property type="match status" value="1"/>
</dbReference>
<dbReference type="PANTHER" id="PTHR34039">
    <property type="entry name" value="UPF0102 PROTEIN YRAN"/>
    <property type="match status" value="1"/>
</dbReference>
<dbReference type="PANTHER" id="PTHR34039:SF1">
    <property type="entry name" value="UPF0102 PROTEIN YRAN"/>
    <property type="match status" value="1"/>
</dbReference>
<dbReference type="Pfam" id="PF02021">
    <property type="entry name" value="UPF0102"/>
    <property type="match status" value="1"/>
</dbReference>
<dbReference type="SUPFAM" id="SSF52980">
    <property type="entry name" value="Restriction endonuclease-like"/>
    <property type="match status" value="1"/>
</dbReference>
<sequence>MPSVSVWVRSLAPMTTWTRAAIGALGEDLAVKHLDSLGMRVLERNWRCRYGELDVIAEDPAARAVVFVEVKTRTTDHFGGVAEAVTPQKVRRLRRLAGLWLAGRDERWAAVRIDVIGVRIGRQATPEITHLTGVA</sequence>